<feature type="initiator methionine" description="Removed" evidence="1">
    <location>
        <position position="1"/>
    </location>
</feature>
<feature type="chain" id="PRO_0000102095" description="Exosome RNA helicase MTR4">
    <location>
        <begin position="2"/>
        <end position="1040"/>
    </location>
</feature>
<feature type="domain" description="Helicase ATP-binding" evidence="2">
    <location>
        <begin position="146"/>
        <end position="302"/>
    </location>
</feature>
<feature type="domain" description="Helicase C-terminal" evidence="3">
    <location>
        <begin position="403"/>
        <end position="575"/>
    </location>
</feature>
<feature type="region of interest" description="Disordered" evidence="4">
    <location>
        <begin position="16"/>
        <end position="77"/>
    </location>
</feature>
<feature type="short sequence motif" description="DEIH box">
    <location>
        <begin position="250"/>
        <end position="253"/>
    </location>
</feature>
<feature type="compositionally biased region" description="Basic and acidic residues" evidence="4">
    <location>
        <begin position="23"/>
        <end position="33"/>
    </location>
</feature>
<feature type="compositionally biased region" description="Basic and acidic residues" evidence="4">
    <location>
        <begin position="41"/>
        <end position="50"/>
    </location>
</feature>
<feature type="binding site" evidence="1">
    <location>
        <position position="137"/>
    </location>
    <ligand>
        <name>ATP</name>
        <dbReference type="ChEBI" id="CHEBI:30616"/>
    </ligand>
</feature>
<feature type="binding site" evidence="2">
    <location>
        <begin position="159"/>
        <end position="166"/>
    </location>
    <ligand>
        <name>ATP</name>
        <dbReference type="ChEBI" id="CHEBI:30616"/>
    </ligand>
</feature>
<feature type="binding site" evidence="1">
    <location>
        <position position="162"/>
    </location>
    <ligand>
        <name>ATP</name>
        <dbReference type="ChEBI" id="CHEBI:30616"/>
    </ligand>
</feature>
<feature type="binding site" evidence="1">
    <location>
        <position position="164"/>
    </location>
    <ligand>
        <name>ATP</name>
        <dbReference type="ChEBI" id="CHEBI:30616"/>
    </ligand>
</feature>
<feature type="binding site" evidence="1">
    <location>
        <position position="165"/>
    </location>
    <ligand>
        <name>ATP</name>
        <dbReference type="ChEBI" id="CHEBI:30616"/>
    </ligand>
</feature>
<feature type="binding site" evidence="1">
    <location>
        <position position="166"/>
    </location>
    <ligand>
        <name>ATP</name>
        <dbReference type="ChEBI" id="CHEBI:30616"/>
    </ligand>
</feature>
<feature type="modified residue" description="N-acetylalanine" evidence="1">
    <location>
        <position position="2"/>
    </location>
</feature>
<feature type="modified residue" description="Phosphoserine" evidence="1">
    <location>
        <position position="38"/>
    </location>
</feature>
<feature type="modified residue" description="N6-acetyllysine" evidence="1">
    <location>
        <position position="49"/>
    </location>
</feature>
<feature type="modified residue" description="N6-acetyllysine" evidence="7">
    <location>
        <position position="76"/>
    </location>
</feature>
<feature type="cross-link" description="Glycyl lysine isopeptide (Lys-Gly) (interchain with G-Cter in SUMO2)" evidence="1">
    <location>
        <position position="24"/>
    </location>
</feature>
<feature type="cross-link" description="Glycyl lysine isopeptide (Lys-Gly) (interchain with G-Cter in SUMO2)" evidence="1">
    <location>
        <position position="356"/>
    </location>
</feature>
<feature type="cross-link" description="Glycyl lysine isopeptide (Lys-Gly) (interchain with G-Cter in SUMO2)" evidence="1">
    <location>
        <position position="682"/>
    </location>
</feature>
<feature type="cross-link" description="Glycyl lysine isopeptide (Lys-Gly) (interchain with G-Cter in SUMO2)" evidence="1">
    <location>
        <position position="721"/>
    </location>
</feature>
<gene>
    <name evidence="6" type="primary">Mtrex</name>
    <name type="synonym">Skiv2l2</name>
</gene>
<keyword id="KW-0007">Acetylation</keyword>
<keyword id="KW-0067">ATP-binding</keyword>
<keyword id="KW-0227">DNA damage</keyword>
<keyword id="KW-0347">Helicase</keyword>
<keyword id="KW-0378">Hydrolase</keyword>
<keyword id="KW-1017">Isopeptide bond</keyword>
<keyword id="KW-0507">mRNA processing</keyword>
<keyword id="KW-0508">mRNA splicing</keyword>
<keyword id="KW-0547">Nucleotide-binding</keyword>
<keyword id="KW-0539">Nucleus</keyword>
<keyword id="KW-0597">Phosphoprotein</keyword>
<keyword id="KW-1185">Reference proteome</keyword>
<keyword id="KW-0698">rRNA processing</keyword>
<keyword id="KW-0747">Spliceosome</keyword>
<keyword id="KW-0832">Ubl conjugation</keyword>
<protein>
    <recommendedName>
        <fullName evidence="5">Exosome RNA helicase MTR4</fullName>
        <ecNumber evidence="1">3.6.4.13</ecNumber>
    </recommendedName>
    <alternativeName>
        <fullName>ATP-dependent helicase SKIV2L2</fullName>
    </alternativeName>
    <alternativeName>
        <fullName>Superkiller viralicidic activity 2-like 2</fullName>
    </alternativeName>
    <alternativeName>
        <fullName>TRAMP-like complex helicase</fullName>
    </alternativeName>
</protein>
<evidence type="ECO:0000250" key="1">
    <source>
        <dbReference type="UniProtKB" id="P42285"/>
    </source>
</evidence>
<evidence type="ECO:0000255" key="2">
    <source>
        <dbReference type="PROSITE-ProRule" id="PRU00541"/>
    </source>
</evidence>
<evidence type="ECO:0000255" key="3">
    <source>
        <dbReference type="PROSITE-ProRule" id="PRU00542"/>
    </source>
</evidence>
<evidence type="ECO:0000256" key="4">
    <source>
        <dbReference type="SAM" id="MobiDB-lite"/>
    </source>
</evidence>
<evidence type="ECO:0000305" key="5"/>
<evidence type="ECO:0000312" key="6">
    <source>
        <dbReference type="MGI" id="MGI:1919448"/>
    </source>
</evidence>
<evidence type="ECO:0007744" key="7">
    <source>
    </source>
</evidence>
<reference key="1">
    <citation type="journal article" date="2005" name="Science">
        <title>The transcriptional landscape of the mammalian genome.</title>
        <authorList>
            <person name="Carninci P."/>
            <person name="Kasukawa T."/>
            <person name="Katayama S."/>
            <person name="Gough J."/>
            <person name="Frith M.C."/>
            <person name="Maeda N."/>
            <person name="Oyama R."/>
            <person name="Ravasi T."/>
            <person name="Lenhard B."/>
            <person name="Wells C."/>
            <person name="Kodzius R."/>
            <person name="Shimokawa K."/>
            <person name="Bajic V.B."/>
            <person name="Brenner S.E."/>
            <person name="Batalov S."/>
            <person name="Forrest A.R."/>
            <person name="Zavolan M."/>
            <person name="Davis M.J."/>
            <person name="Wilming L.G."/>
            <person name="Aidinis V."/>
            <person name="Allen J.E."/>
            <person name="Ambesi-Impiombato A."/>
            <person name="Apweiler R."/>
            <person name="Aturaliya R.N."/>
            <person name="Bailey T.L."/>
            <person name="Bansal M."/>
            <person name="Baxter L."/>
            <person name="Beisel K.W."/>
            <person name="Bersano T."/>
            <person name="Bono H."/>
            <person name="Chalk A.M."/>
            <person name="Chiu K.P."/>
            <person name="Choudhary V."/>
            <person name="Christoffels A."/>
            <person name="Clutterbuck D.R."/>
            <person name="Crowe M.L."/>
            <person name="Dalla E."/>
            <person name="Dalrymple B.P."/>
            <person name="de Bono B."/>
            <person name="Della Gatta G."/>
            <person name="di Bernardo D."/>
            <person name="Down T."/>
            <person name="Engstrom P."/>
            <person name="Fagiolini M."/>
            <person name="Faulkner G."/>
            <person name="Fletcher C.F."/>
            <person name="Fukushima T."/>
            <person name="Furuno M."/>
            <person name="Futaki S."/>
            <person name="Gariboldi M."/>
            <person name="Georgii-Hemming P."/>
            <person name="Gingeras T.R."/>
            <person name="Gojobori T."/>
            <person name="Green R.E."/>
            <person name="Gustincich S."/>
            <person name="Harbers M."/>
            <person name="Hayashi Y."/>
            <person name="Hensch T.K."/>
            <person name="Hirokawa N."/>
            <person name="Hill D."/>
            <person name="Huminiecki L."/>
            <person name="Iacono M."/>
            <person name="Ikeo K."/>
            <person name="Iwama A."/>
            <person name="Ishikawa T."/>
            <person name="Jakt M."/>
            <person name="Kanapin A."/>
            <person name="Katoh M."/>
            <person name="Kawasawa Y."/>
            <person name="Kelso J."/>
            <person name="Kitamura H."/>
            <person name="Kitano H."/>
            <person name="Kollias G."/>
            <person name="Krishnan S.P."/>
            <person name="Kruger A."/>
            <person name="Kummerfeld S.K."/>
            <person name="Kurochkin I.V."/>
            <person name="Lareau L.F."/>
            <person name="Lazarevic D."/>
            <person name="Lipovich L."/>
            <person name="Liu J."/>
            <person name="Liuni S."/>
            <person name="McWilliam S."/>
            <person name="Madan Babu M."/>
            <person name="Madera M."/>
            <person name="Marchionni L."/>
            <person name="Matsuda H."/>
            <person name="Matsuzawa S."/>
            <person name="Miki H."/>
            <person name="Mignone F."/>
            <person name="Miyake S."/>
            <person name="Morris K."/>
            <person name="Mottagui-Tabar S."/>
            <person name="Mulder N."/>
            <person name="Nakano N."/>
            <person name="Nakauchi H."/>
            <person name="Ng P."/>
            <person name="Nilsson R."/>
            <person name="Nishiguchi S."/>
            <person name="Nishikawa S."/>
            <person name="Nori F."/>
            <person name="Ohara O."/>
            <person name="Okazaki Y."/>
            <person name="Orlando V."/>
            <person name="Pang K.C."/>
            <person name="Pavan W.J."/>
            <person name="Pavesi G."/>
            <person name="Pesole G."/>
            <person name="Petrovsky N."/>
            <person name="Piazza S."/>
            <person name="Reed J."/>
            <person name="Reid J.F."/>
            <person name="Ring B.Z."/>
            <person name="Ringwald M."/>
            <person name="Rost B."/>
            <person name="Ruan Y."/>
            <person name="Salzberg S.L."/>
            <person name="Sandelin A."/>
            <person name="Schneider C."/>
            <person name="Schoenbach C."/>
            <person name="Sekiguchi K."/>
            <person name="Semple C.A."/>
            <person name="Seno S."/>
            <person name="Sessa L."/>
            <person name="Sheng Y."/>
            <person name="Shibata Y."/>
            <person name="Shimada H."/>
            <person name="Shimada K."/>
            <person name="Silva D."/>
            <person name="Sinclair B."/>
            <person name="Sperling S."/>
            <person name="Stupka E."/>
            <person name="Sugiura K."/>
            <person name="Sultana R."/>
            <person name="Takenaka Y."/>
            <person name="Taki K."/>
            <person name="Tammoja K."/>
            <person name="Tan S.L."/>
            <person name="Tang S."/>
            <person name="Taylor M.S."/>
            <person name="Tegner J."/>
            <person name="Teichmann S.A."/>
            <person name="Ueda H.R."/>
            <person name="van Nimwegen E."/>
            <person name="Verardo R."/>
            <person name="Wei C.L."/>
            <person name="Yagi K."/>
            <person name="Yamanishi H."/>
            <person name="Zabarovsky E."/>
            <person name="Zhu S."/>
            <person name="Zimmer A."/>
            <person name="Hide W."/>
            <person name="Bult C."/>
            <person name="Grimmond S.M."/>
            <person name="Teasdale R.D."/>
            <person name="Liu E.T."/>
            <person name="Brusic V."/>
            <person name="Quackenbush J."/>
            <person name="Wahlestedt C."/>
            <person name="Mattick J.S."/>
            <person name="Hume D.A."/>
            <person name="Kai C."/>
            <person name="Sasaki D."/>
            <person name="Tomaru Y."/>
            <person name="Fukuda S."/>
            <person name="Kanamori-Katayama M."/>
            <person name="Suzuki M."/>
            <person name="Aoki J."/>
            <person name="Arakawa T."/>
            <person name="Iida J."/>
            <person name="Imamura K."/>
            <person name="Itoh M."/>
            <person name="Kato T."/>
            <person name="Kawaji H."/>
            <person name="Kawagashira N."/>
            <person name="Kawashima T."/>
            <person name="Kojima M."/>
            <person name="Kondo S."/>
            <person name="Konno H."/>
            <person name="Nakano K."/>
            <person name="Ninomiya N."/>
            <person name="Nishio T."/>
            <person name="Okada M."/>
            <person name="Plessy C."/>
            <person name="Shibata K."/>
            <person name="Shiraki T."/>
            <person name="Suzuki S."/>
            <person name="Tagami M."/>
            <person name="Waki K."/>
            <person name="Watahiki A."/>
            <person name="Okamura-Oho Y."/>
            <person name="Suzuki H."/>
            <person name="Kawai J."/>
            <person name="Hayashizaki Y."/>
        </authorList>
    </citation>
    <scope>NUCLEOTIDE SEQUENCE [LARGE SCALE MRNA]</scope>
    <source>
        <strain>C57BL/6J</strain>
    </source>
</reference>
<reference key="2">
    <citation type="journal article" date="2004" name="Genome Res.">
        <title>The status, quality, and expansion of the NIH full-length cDNA project: the Mammalian Gene Collection (MGC).</title>
        <authorList>
            <consortium name="The MGC Project Team"/>
        </authorList>
    </citation>
    <scope>NUCLEOTIDE SEQUENCE [LARGE SCALE MRNA]</scope>
    <source>
        <strain>FVB/N</strain>
        <tissue>Mammary tumor</tissue>
    </source>
</reference>
<reference key="3">
    <citation type="journal article" date="2010" name="Cell">
        <title>A tissue-specific atlas of mouse protein phosphorylation and expression.</title>
        <authorList>
            <person name="Huttlin E.L."/>
            <person name="Jedrychowski M.P."/>
            <person name="Elias J.E."/>
            <person name="Goswami T."/>
            <person name="Rad R."/>
            <person name="Beausoleil S.A."/>
            <person name="Villen J."/>
            <person name="Haas W."/>
            <person name="Sowa M.E."/>
            <person name="Gygi S.P."/>
        </authorList>
    </citation>
    <scope>IDENTIFICATION BY MASS SPECTROMETRY [LARGE SCALE ANALYSIS]</scope>
    <source>
        <tissue>Brain</tissue>
        <tissue>Heart</tissue>
        <tissue>Kidney</tissue>
        <tissue>Liver</tissue>
        <tissue>Lung</tissue>
        <tissue>Pancreas</tissue>
        <tissue>Spleen</tissue>
        <tissue>Testis</tissue>
    </source>
</reference>
<reference key="4">
    <citation type="journal article" date="2013" name="Mol. Cell">
        <title>SIRT5-mediated lysine desuccinylation impacts diverse metabolic pathways.</title>
        <authorList>
            <person name="Park J."/>
            <person name="Chen Y."/>
            <person name="Tishkoff D.X."/>
            <person name="Peng C."/>
            <person name="Tan M."/>
            <person name="Dai L."/>
            <person name="Xie Z."/>
            <person name="Zhang Y."/>
            <person name="Zwaans B.M."/>
            <person name="Skinner M.E."/>
            <person name="Lombard D.B."/>
            <person name="Zhao Y."/>
        </authorList>
    </citation>
    <scope>ACETYLATION [LARGE SCALE ANALYSIS] AT LYS-76</scope>
    <scope>IDENTIFICATION BY MASS SPECTROMETRY [LARGE SCALE ANALYSIS]</scope>
    <source>
        <tissue>Embryonic fibroblast</tissue>
    </source>
</reference>
<dbReference type="EC" id="3.6.4.13" evidence="1"/>
<dbReference type="EMBL" id="AK012158">
    <property type="protein sequence ID" value="BAB28066.1"/>
    <property type="molecule type" value="mRNA"/>
</dbReference>
<dbReference type="EMBL" id="BC029230">
    <property type="protein sequence ID" value="AAH29230.1"/>
    <property type="molecule type" value="mRNA"/>
</dbReference>
<dbReference type="CCDS" id="CCDS26778.1"/>
<dbReference type="RefSeq" id="NP_082427.1">
    <property type="nucleotide sequence ID" value="NM_028151.2"/>
</dbReference>
<dbReference type="SMR" id="Q9CZU3"/>
<dbReference type="BioGRID" id="215213">
    <property type="interactions" value="44"/>
</dbReference>
<dbReference type="ELM" id="Q9CZU3"/>
<dbReference type="FunCoup" id="Q9CZU3">
    <property type="interactions" value="4493"/>
</dbReference>
<dbReference type="IntAct" id="Q9CZU3">
    <property type="interactions" value="2"/>
</dbReference>
<dbReference type="STRING" id="10090.ENSMUSP00000022281"/>
<dbReference type="iPTMnet" id="Q9CZU3"/>
<dbReference type="PhosphoSitePlus" id="Q9CZU3"/>
<dbReference type="SwissPalm" id="Q9CZU3"/>
<dbReference type="PaxDb" id="10090-ENSMUSP00000022281"/>
<dbReference type="PeptideAtlas" id="Q9CZU3"/>
<dbReference type="ProteomicsDB" id="290114"/>
<dbReference type="Pumba" id="Q9CZU3"/>
<dbReference type="Antibodypedia" id="23424">
    <property type="antibodies" value="215 antibodies from 30 providers"/>
</dbReference>
<dbReference type="DNASU" id="72198"/>
<dbReference type="Ensembl" id="ENSMUST00000022281.5">
    <property type="protein sequence ID" value="ENSMUSP00000022281.4"/>
    <property type="gene ID" value="ENSMUSG00000016018.5"/>
</dbReference>
<dbReference type="GeneID" id="72198"/>
<dbReference type="KEGG" id="mmu:72198"/>
<dbReference type="UCSC" id="uc007rws.1">
    <property type="organism name" value="mouse"/>
</dbReference>
<dbReference type="AGR" id="MGI:1919448"/>
<dbReference type="CTD" id="23517"/>
<dbReference type="MGI" id="MGI:1919448">
    <property type="gene designation" value="Mtrex"/>
</dbReference>
<dbReference type="VEuPathDB" id="HostDB:ENSMUSG00000016018"/>
<dbReference type="eggNOG" id="KOG0948">
    <property type="taxonomic scope" value="Eukaryota"/>
</dbReference>
<dbReference type="GeneTree" id="ENSGT00940000156183"/>
<dbReference type="HOGENOM" id="CLU_002902_0_1_1"/>
<dbReference type="InParanoid" id="Q9CZU3"/>
<dbReference type="OMA" id="IMLKNYN"/>
<dbReference type="OrthoDB" id="64767at2759"/>
<dbReference type="PhylomeDB" id="Q9CZU3"/>
<dbReference type="TreeFam" id="TF300597"/>
<dbReference type="Reactome" id="R-MMU-6791226">
    <property type="pathway name" value="Major pathway of rRNA processing in the nucleolus and cytosol"/>
</dbReference>
<dbReference type="Reactome" id="R-MMU-72163">
    <property type="pathway name" value="mRNA Splicing - Major Pathway"/>
</dbReference>
<dbReference type="BioGRID-ORCS" id="72198">
    <property type="hits" value="26 hits in 80 CRISPR screens"/>
</dbReference>
<dbReference type="ChiTaRS" id="Skiv2l2">
    <property type="organism name" value="mouse"/>
</dbReference>
<dbReference type="PRO" id="PR:Q9CZU3"/>
<dbReference type="Proteomes" id="UP000000589">
    <property type="component" value="Chromosome 13"/>
</dbReference>
<dbReference type="RNAct" id="Q9CZU3">
    <property type="molecule type" value="protein"/>
</dbReference>
<dbReference type="Bgee" id="ENSMUSG00000016018">
    <property type="expression patterns" value="Expressed in indifferent gonad and 259 other cell types or tissues"/>
</dbReference>
<dbReference type="GO" id="GO:0071013">
    <property type="term" value="C:catalytic step 2 spliceosome"/>
    <property type="evidence" value="ECO:0007669"/>
    <property type="project" value="Ensembl"/>
</dbReference>
<dbReference type="GO" id="GO:0000176">
    <property type="term" value="C:nuclear exosome (RNase complex)"/>
    <property type="evidence" value="ECO:0007669"/>
    <property type="project" value="Ensembl"/>
</dbReference>
<dbReference type="GO" id="GO:0016607">
    <property type="term" value="C:nuclear speck"/>
    <property type="evidence" value="ECO:0007669"/>
    <property type="project" value="UniProtKB-SubCell"/>
</dbReference>
<dbReference type="GO" id="GO:0005730">
    <property type="term" value="C:nucleolus"/>
    <property type="evidence" value="ECO:0007669"/>
    <property type="project" value="UniProtKB-SubCell"/>
</dbReference>
<dbReference type="GO" id="GO:0005654">
    <property type="term" value="C:nucleoplasm"/>
    <property type="evidence" value="ECO:0000304"/>
    <property type="project" value="Reactome"/>
</dbReference>
<dbReference type="GO" id="GO:0005634">
    <property type="term" value="C:nucleus"/>
    <property type="evidence" value="ECO:0000250"/>
    <property type="project" value="UniProtKB"/>
</dbReference>
<dbReference type="GO" id="GO:0031499">
    <property type="term" value="C:TRAMP complex"/>
    <property type="evidence" value="ECO:0007669"/>
    <property type="project" value="Ensembl"/>
</dbReference>
<dbReference type="GO" id="GO:0005524">
    <property type="term" value="F:ATP binding"/>
    <property type="evidence" value="ECO:0000250"/>
    <property type="project" value="UniProtKB"/>
</dbReference>
<dbReference type="GO" id="GO:0016887">
    <property type="term" value="F:ATP hydrolysis activity"/>
    <property type="evidence" value="ECO:0007669"/>
    <property type="project" value="RHEA"/>
</dbReference>
<dbReference type="GO" id="GO:0003723">
    <property type="term" value="F:RNA binding"/>
    <property type="evidence" value="ECO:0007669"/>
    <property type="project" value="InterPro"/>
</dbReference>
<dbReference type="GO" id="GO:0003724">
    <property type="term" value="F:RNA helicase activity"/>
    <property type="evidence" value="ECO:0000250"/>
    <property type="project" value="UniProtKB"/>
</dbReference>
<dbReference type="GO" id="GO:0006974">
    <property type="term" value="P:DNA damage response"/>
    <property type="evidence" value="ECO:0000250"/>
    <property type="project" value="UniProtKB"/>
</dbReference>
<dbReference type="GO" id="GO:0000460">
    <property type="term" value="P:maturation of 5.8S rRNA"/>
    <property type="evidence" value="ECO:0007669"/>
    <property type="project" value="Ensembl"/>
</dbReference>
<dbReference type="GO" id="GO:0006397">
    <property type="term" value="P:mRNA processing"/>
    <property type="evidence" value="ECO:0007669"/>
    <property type="project" value="UniProtKB-KW"/>
</dbReference>
<dbReference type="GO" id="GO:0006401">
    <property type="term" value="P:RNA catabolic process"/>
    <property type="evidence" value="ECO:0000250"/>
    <property type="project" value="UniProtKB"/>
</dbReference>
<dbReference type="GO" id="GO:0008380">
    <property type="term" value="P:RNA splicing"/>
    <property type="evidence" value="ECO:0007669"/>
    <property type="project" value="UniProtKB-KW"/>
</dbReference>
<dbReference type="GO" id="GO:0006364">
    <property type="term" value="P:rRNA processing"/>
    <property type="evidence" value="ECO:0000250"/>
    <property type="project" value="UniProtKB"/>
</dbReference>
<dbReference type="CDD" id="cd18024">
    <property type="entry name" value="DEXHc_Mtr4-like"/>
    <property type="match status" value="1"/>
</dbReference>
<dbReference type="CDD" id="cd13154">
    <property type="entry name" value="KOW_Mtr4"/>
    <property type="match status" value="1"/>
</dbReference>
<dbReference type="CDD" id="cd18795">
    <property type="entry name" value="SF2_C_Ski2"/>
    <property type="match status" value="1"/>
</dbReference>
<dbReference type="FunFam" id="3.40.50.300:FF:000083">
    <property type="entry name" value="ATP-dependent RNA helicase DOB1"/>
    <property type="match status" value="1"/>
</dbReference>
<dbReference type="FunFam" id="3.40.50.300:FF:000141">
    <property type="entry name" value="ATP-dependent RNA helicase DOB1"/>
    <property type="match status" value="1"/>
</dbReference>
<dbReference type="FunFam" id="2.40.30.300:FF:000001">
    <property type="entry name" value="Mtr4 exosome RNA helicase"/>
    <property type="match status" value="1"/>
</dbReference>
<dbReference type="FunFam" id="1.10.3380.30:FF:000004">
    <property type="entry name" value="Superkiller viralicidic activity 2-like 2"/>
    <property type="match status" value="1"/>
</dbReference>
<dbReference type="FunFam" id="1.10.3380.30:FF:000002">
    <property type="entry name" value="superkiller viralicidic activity 2-like 2"/>
    <property type="match status" value="1"/>
</dbReference>
<dbReference type="Gene3D" id="1.10.3380.30">
    <property type="match status" value="2"/>
</dbReference>
<dbReference type="Gene3D" id="2.40.30.300">
    <property type="match status" value="1"/>
</dbReference>
<dbReference type="Gene3D" id="3.40.50.300">
    <property type="entry name" value="P-loop containing nucleotide triphosphate hydrolases"/>
    <property type="match status" value="2"/>
</dbReference>
<dbReference type="InterPro" id="IPR011545">
    <property type="entry name" value="DEAD/DEAH_box_helicase_dom"/>
</dbReference>
<dbReference type="InterPro" id="IPR014001">
    <property type="entry name" value="Helicase_ATP-bd"/>
</dbReference>
<dbReference type="InterPro" id="IPR001650">
    <property type="entry name" value="Helicase_C-like"/>
</dbReference>
<dbReference type="InterPro" id="IPR048392">
    <property type="entry name" value="MTR4-like_stalk"/>
</dbReference>
<dbReference type="InterPro" id="IPR025696">
    <property type="entry name" value="MTR4_beta-barrel"/>
</dbReference>
<dbReference type="InterPro" id="IPR027417">
    <property type="entry name" value="P-loop_NTPase"/>
</dbReference>
<dbReference type="InterPro" id="IPR050699">
    <property type="entry name" value="RNA-DNA_Helicase"/>
</dbReference>
<dbReference type="InterPro" id="IPR016438">
    <property type="entry name" value="SKI2-like"/>
</dbReference>
<dbReference type="InterPro" id="IPR012961">
    <property type="entry name" value="Ski2/MTR4_C"/>
</dbReference>
<dbReference type="PANTHER" id="PTHR12131">
    <property type="entry name" value="ATP-DEPENDENT RNA AND DNA HELICASE"/>
    <property type="match status" value="1"/>
</dbReference>
<dbReference type="PANTHER" id="PTHR12131:SF7">
    <property type="entry name" value="EXOSOME RNA HELICASE MTR4"/>
    <property type="match status" value="1"/>
</dbReference>
<dbReference type="Pfam" id="PF00270">
    <property type="entry name" value="DEAD"/>
    <property type="match status" value="1"/>
</dbReference>
<dbReference type="Pfam" id="PF08148">
    <property type="entry name" value="DSHCT"/>
    <property type="match status" value="1"/>
</dbReference>
<dbReference type="Pfam" id="PF00271">
    <property type="entry name" value="Helicase_C"/>
    <property type="match status" value="1"/>
</dbReference>
<dbReference type="Pfam" id="PF21408">
    <property type="entry name" value="MTR4-like_stalk"/>
    <property type="match status" value="1"/>
</dbReference>
<dbReference type="Pfam" id="PF13234">
    <property type="entry name" value="MTR4_beta-barrel"/>
    <property type="match status" value="1"/>
</dbReference>
<dbReference type="PIRSF" id="PIRSF005198">
    <property type="entry name" value="Antiviral_helicase_SKI2"/>
    <property type="match status" value="1"/>
</dbReference>
<dbReference type="SMART" id="SM00487">
    <property type="entry name" value="DEXDc"/>
    <property type="match status" value="1"/>
</dbReference>
<dbReference type="SMART" id="SM01142">
    <property type="entry name" value="DSHCT"/>
    <property type="match status" value="1"/>
</dbReference>
<dbReference type="SMART" id="SM00490">
    <property type="entry name" value="HELICc"/>
    <property type="match status" value="1"/>
</dbReference>
<dbReference type="SUPFAM" id="SSF52540">
    <property type="entry name" value="P-loop containing nucleoside triphosphate hydrolases"/>
    <property type="match status" value="1"/>
</dbReference>
<dbReference type="PROSITE" id="PS51192">
    <property type="entry name" value="HELICASE_ATP_BIND_1"/>
    <property type="match status" value="1"/>
</dbReference>
<dbReference type="PROSITE" id="PS51194">
    <property type="entry name" value="HELICASE_CTER"/>
    <property type="match status" value="1"/>
</dbReference>
<comment type="function">
    <text evidence="1">Catalyzes the ATP-dependent unwinding of RNA duplexes with a single-stranded 3' RNA extension. Central subunit of many protein complexes, namely TRAMP-like, nuclear exosome targeting (NEXT) and poly(A) tail exosome targeting (PAXT). NEXT functions as an RNA exosome cofactor that directs a subset of non-coding short-lived RNAs for exosomal degradation. NEXT is involved in surveillance and turnover of aberrant transcripts and non-coding RNAs. PAXT directs a subset of long and polyadenylated poly(A) RNAs for exosomal degradation. The RNA exosome is fundamental for the degradation of RNA in eukaryotic nuclei. Substrate targeting is facilitated by its cofactor ZCCHC8, which links to RNA-binding protein adapters. Associated with the RNA exosome complex and involved in the 3'-processing of the 7S pre-RNA to the mature 5.8S rRNA. May be involved in pre-mRNA splicing. In the context of NEXT complex can also in vitro unwind DNA:RNA heteroduplexes with a 3' poly (A) RNA tracking strand. Can promote unwinding and degradation of structured RNA substrates when associated with the nuclear exosome and its cofactors. Can displace a DNA strand while translocating on RNA to ultimately degrade the RNA within a DNA/RNA heteroduplex (By similarity). Plays a role in DNA damage response (By similarity).</text>
</comment>
<comment type="catalytic activity">
    <reaction evidence="1">
        <text>ATP + H2O = ADP + phosphate + H(+)</text>
        <dbReference type="Rhea" id="RHEA:13065"/>
        <dbReference type="ChEBI" id="CHEBI:15377"/>
        <dbReference type="ChEBI" id="CHEBI:15378"/>
        <dbReference type="ChEBI" id="CHEBI:30616"/>
        <dbReference type="ChEBI" id="CHEBI:43474"/>
        <dbReference type="ChEBI" id="CHEBI:456216"/>
        <dbReference type="EC" id="3.6.4.13"/>
    </reaction>
    <physiologicalReaction direction="left-to-right" evidence="1">
        <dbReference type="Rhea" id="RHEA:13066"/>
    </physiologicalReaction>
</comment>
<comment type="activity regulation">
    <text evidence="1">Activated when MTREX is incorporated into NEXT complex an the nuclear RNA exosome complex.</text>
</comment>
<comment type="subunit">
    <text evidence="1">Component of a TRAMP-like complex, an ATP-dependent exosome regulatory complex consisting of a helicase (MTREX), an oligadenylate polymerase (TENT4B or TENT4A), and a substrate specific RNA-binding factor (ZCCHC7 or ZCCHC8). Several TRAMP-like complexes exist with specific compositions and are associated with nuclear, or nucleolar RNA exosomes. Identified in the spliceosome C complex. Component of the poly(A) tail exosome targeting (PAXT) complex made of PABPN1, ZFC3H1 and MTREX that directs a subset of long and polyadenylated poly(A) RNAs for exosomal degradation. Component of the nuclear exosome targeting (NEXT) complex composed of MTREX, ZCCHC8, and RBM7 that directs a subset of non-coding short-lived RNAs for exosomal degradation. Interacts with ZCCHC8; this interaction bridges the interaction between RBM7 and MTREX. Binds to ZFC3H1 and RBM7 in a RNase-insensitive manner. Interacts with EXOSC10; the interaction mediates the association of MTREX with nuclear RNA exosomes. Interacts with isoform 1 of NVL in an ATP-dependent manner; the interaction is required to associate NVL with nuclear RNA exosome. Interacts with WDR74; the interaction dissociation in a late stage of rRNA synthesis is required for appropriate maturation of pre-60S particles and depends on the ATPase activity of NVL. Interacts with MPHOSPH6. Interacts with the RNA cap-binding complex proteins NCBP1 and SRRT. Interacts with NRDE2; the interaction is direct and negatively regulates MTREX function in exosomal degradation by changing its conformation precluding interaction with ZFC3H1, the RNA cap-binding complex proteins NCBP1 and SRRT, and association with the exosome. Associates with the RNA exosome complex.</text>
</comment>
<comment type="subcellular location">
    <subcellularLocation>
        <location evidence="1">Nucleus</location>
        <location evidence="1">Nucleoplasm</location>
    </subcellularLocation>
    <subcellularLocation>
        <location evidence="1">Nucleus</location>
        <location evidence="1">Nucleolus</location>
    </subcellularLocation>
    <subcellularLocation>
        <location evidence="1">Nucleus</location>
    </subcellularLocation>
    <subcellularLocation>
        <location evidence="1">Nucleus speckle</location>
    </subcellularLocation>
</comment>
<comment type="similarity">
    <text evidence="5">Belongs to the helicase family. SKI2 subfamily.</text>
</comment>
<organism>
    <name type="scientific">Mus musculus</name>
    <name type="common">Mouse</name>
    <dbReference type="NCBI Taxonomy" id="10090"/>
    <lineage>
        <taxon>Eukaryota</taxon>
        <taxon>Metazoa</taxon>
        <taxon>Chordata</taxon>
        <taxon>Craniata</taxon>
        <taxon>Vertebrata</taxon>
        <taxon>Euteleostomi</taxon>
        <taxon>Mammalia</taxon>
        <taxon>Eutheria</taxon>
        <taxon>Euarchontoglires</taxon>
        <taxon>Glires</taxon>
        <taxon>Rodentia</taxon>
        <taxon>Myomorpha</taxon>
        <taxon>Muroidea</taxon>
        <taxon>Muridae</taxon>
        <taxon>Murinae</taxon>
        <taxon>Mus</taxon>
        <taxon>Mus</taxon>
    </lineage>
</organism>
<name>MTREX_MOUSE</name>
<sequence>MADAFGDELFSVFEDDSTSAAGAKKDKEKEKWKGPPGSADKAGKRLDTKLQSESASGGKNKRDLDVEGTDEPIFGKKPRIEDSINEDLSLADLMPRVKVQSVETVEGCTHEVALPADEDYIPLKPRVGKAAKEYPFILDAFQREAIQCVDNNQSVLVSAHTSAGKTVCAEYAIALALREKQRVIFTSPIKALSNQKYREMYEEFQDVGLMTGDVTINPTASCLVMTTEILRSMLYRGSEVMREVAWVIFDEIHYMRDSERGVVWEETIILLPDNVHYVFLSATIPNARQFAEWICHLHKQPCHVIYTDYRPTPLQHYIFPAGGDGLHLVVDENGDFREDNFNTAMQVLRDAGDLAKGDQKGRKGGTKGPSNVFKIVKMIMERNFQPVIIFSFSKKDCEAYALQMTKLDFNTDEEKKMVEEVFNNAIDCLSDEDKKLPQVEHVLPLLKRGIGIHHGGLLPILKETIEILFSEGLIKALFATETFAMGINMPARTVLFTNARKYDGKDFRWISSGEYIQMSGRAGRRGMDDRGIVILMVDEKMSPTIGKQLLKGSADPLNSAFHLTYNMVLNLLRVEEINPEYMLEKSFYQFQHYRAIPGVVEKVKNSEEQYNKIVIPNEENVVIYYKIRQQLAKLGKEIEEYIHKPKYCLPFLQPGRLVKVKNEGDDFGWGVVVNFSKKSNVKPNSGELDPLYVVEVLLRCSKESLKNSATEAAKPAKPDEKGEMQVVPVLVHLLSAISTVRLYIPKDLRPVDNRQSVLKSIQEVQRRFPDGVPLLDPIDDMGIQDQGLKKVIQKVEAFEHRMYSHPLHNDPNLETVYTLCERKAQIALDIKSAKRELKKARTVLQMDELKCRKRVLRRLGFATSSDVIEMKGRVACEISSADELLLTEMMFNGLFNDLSSEQATALLSCFVFQENSSEMPKLTEQLAGPLRQMQECAKRIAKVSAEAKLEIDEETYLSSFKPHLMDVVYTWATGATFAHICKMTDVFEGSIIRCMRRLEELLRQMCQAAKAIGNTELENKFAEGITKIKRDIVFAASLYL</sequence>
<accession>Q9CZU3</accession>
<proteinExistence type="evidence at protein level"/>